<sequence length="310" mass="32681">MTFDSFADANEAEVTRAITRQWTDEFLDDTETDVIIVGGGPSGLMAAKELADRDVDVTIIEKNNYLGGGFWLGGFLMNKLTVRSPAEAVLDDLGVPYEYDEENDGLAVADAPHACSAMITAACDAGARIQNMTEFTDIVVRDDHAVAGAVVNWTPVHSLPRELTCVDPIALEADVVVDATGHDAVVVSKLHERGVLEADGIEHVEEHATGMDQSGDGEYGAPGHDSPGHDSMWVADSEDKVVEQTGKVHDGLVTAGLSTATVHGLTRMGPTFGAMLLSGKVAANAVMDELAVDEPRVDLPSTAAPAADDD</sequence>
<organism>
    <name type="scientific">Halobacterium salinarum (strain ATCC 29341 / DSM 671 / R1)</name>
    <dbReference type="NCBI Taxonomy" id="478009"/>
    <lineage>
        <taxon>Archaea</taxon>
        <taxon>Methanobacteriati</taxon>
        <taxon>Methanobacteriota</taxon>
        <taxon>Stenosarchaea group</taxon>
        <taxon>Halobacteria</taxon>
        <taxon>Halobacteriales</taxon>
        <taxon>Halobacteriaceae</taxon>
        <taxon>Halobacterium</taxon>
        <taxon>Halobacterium salinarum NRC-34001</taxon>
    </lineage>
</organism>
<protein>
    <recommendedName>
        <fullName evidence="1">Thiamine thiazole synthase</fullName>
        <ecNumber evidence="1">2.4.2.60</ecNumber>
    </recommendedName>
</protein>
<dbReference type="EC" id="2.4.2.60" evidence="1"/>
<dbReference type="EMBL" id="AM774415">
    <property type="protein sequence ID" value="CAP14953.1"/>
    <property type="molecule type" value="Genomic_DNA"/>
</dbReference>
<dbReference type="RefSeq" id="WP_010903946.1">
    <property type="nucleotide sequence ID" value="NC_010364.1"/>
</dbReference>
<dbReference type="SMR" id="B0R884"/>
<dbReference type="EnsemblBacteria" id="CAP14953">
    <property type="protein sequence ID" value="CAP14953"/>
    <property type="gene ID" value="OE_4651F"/>
</dbReference>
<dbReference type="KEGG" id="hsl:OE_4651F"/>
<dbReference type="HOGENOM" id="CLU_053727_0_0_2"/>
<dbReference type="PhylomeDB" id="B0R884"/>
<dbReference type="UniPathway" id="UPA00060"/>
<dbReference type="Proteomes" id="UP000001321">
    <property type="component" value="Chromosome"/>
</dbReference>
<dbReference type="GO" id="GO:0160205">
    <property type="term" value="F:cysteine-dependent adenosine diphosphate thiazole synthase activity"/>
    <property type="evidence" value="ECO:0007669"/>
    <property type="project" value="RHEA"/>
</dbReference>
<dbReference type="GO" id="GO:0005506">
    <property type="term" value="F:iron ion binding"/>
    <property type="evidence" value="ECO:0007669"/>
    <property type="project" value="UniProtKB-UniRule"/>
</dbReference>
<dbReference type="GO" id="GO:0009228">
    <property type="term" value="P:thiamine biosynthetic process"/>
    <property type="evidence" value="ECO:0007669"/>
    <property type="project" value="UniProtKB-KW"/>
</dbReference>
<dbReference type="GO" id="GO:0009229">
    <property type="term" value="P:thiamine diphosphate biosynthetic process"/>
    <property type="evidence" value="ECO:0007669"/>
    <property type="project" value="UniProtKB-UniRule"/>
</dbReference>
<dbReference type="GO" id="GO:0052837">
    <property type="term" value="P:thiazole biosynthetic process"/>
    <property type="evidence" value="ECO:0007669"/>
    <property type="project" value="UniProtKB-UniRule"/>
</dbReference>
<dbReference type="Gene3D" id="3.50.50.60">
    <property type="entry name" value="FAD/NAD(P)-binding domain"/>
    <property type="match status" value="1"/>
</dbReference>
<dbReference type="HAMAP" id="MF_00304">
    <property type="entry name" value="Thi4"/>
    <property type="match status" value="1"/>
</dbReference>
<dbReference type="InterPro" id="IPR036188">
    <property type="entry name" value="FAD/NAD-bd_sf"/>
</dbReference>
<dbReference type="InterPro" id="IPR002922">
    <property type="entry name" value="Thi4_fam"/>
</dbReference>
<dbReference type="InterPro" id="IPR022828">
    <property type="entry name" value="Thi4_prok"/>
</dbReference>
<dbReference type="NCBIfam" id="TIGR00292">
    <property type="entry name" value="sulfide-dependent adenosine diphosphate thiazole synthase"/>
    <property type="match status" value="1"/>
</dbReference>
<dbReference type="PANTHER" id="PTHR43422">
    <property type="entry name" value="THIAMINE THIAZOLE SYNTHASE"/>
    <property type="match status" value="1"/>
</dbReference>
<dbReference type="PANTHER" id="PTHR43422:SF3">
    <property type="entry name" value="THIAMINE THIAZOLE SYNTHASE"/>
    <property type="match status" value="1"/>
</dbReference>
<dbReference type="Pfam" id="PF01946">
    <property type="entry name" value="Thi4"/>
    <property type="match status" value="2"/>
</dbReference>
<dbReference type="PRINTS" id="PR00411">
    <property type="entry name" value="PNDRDTASEI"/>
</dbReference>
<dbReference type="SUPFAM" id="SSF51905">
    <property type="entry name" value="FAD/NAD(P)-binding domain"/>
    <property type="match status" value="1"/>
</dbReference>
<reference key="1">
    <citation type="journal article" date="2008" name="Genomics">
        <title>Evolution in the laboratory: the genome of Halobacterium salinarum strain R1 compared to that of strain NRC-1.</title>
        <authorList>
            <person name="Pfeiffer F."/>
            <person name="Schuster S.C."/>
            <person name="Broicher A."/>
            <person name="Falb M."/>
            <person name="Palm P."/>
            <person name="Rodewald K."/>
            <person name="Ruepp A."/>
            <person name="Soppa J."/>
            <person name="Tittor J."/>
            <person name="Oesterhelt D."/>
        </authorList>
    </citation>
    <scope>NUCLEOTIDE SEQUENCE [LARGE SCALE GENOMIC DNA]</scope>
    <source>
        <strain>ATCC 29341 / DSM 671 / R1</strain>
    </source>
</reference>
<name>THI4_HALS3</name>
<proteinExistence type="inferred from homology"/>
<evidence type="ECO:0000255" key="1">
    <source>
        <dbReference type="HAMAP-Rule" id="MF_00304"/>
    </source>
</evidence>
<comment type="function">
    <text evidence="1">Involved in biosynthesis of the thiamine precursor thiazole. Catalyzes the conversion of NAD and glycine to adenosine diphosphate 5-(2-hydroxyethyl)-4-methylthiazole-2-carboxylic acid (ADT), an adenylated thiazole intermediate. The reaction includes an iron-dependent sulfide transfer from a conserved cysteine residue of the protein to a thiazole intermediate. The enzyme can only undergo a single turnover, which suggests it is a suicide enzyme.</text>
</comment>
<comment type="catalytic activity">
    <reaction evidence="1">
        <text>[ADP-thiazole synthase]-L-cysteine + glycine + NAD(+) = [ADP-thiazole synthase]-dehydroalanine + ADP-5-ethyl-4-methylthiazole-2-carboxylate + nicotinamide + 3 H2O + 2 H(+)</text>
        <dbReference type="Rhea" id="RHEA:55708"/>
        <dbReference type="Rhea" id="RHEA-COMP:14264"/>
        <dbReference type="Rhea" id="RHEA-COMP:14265"/>
        <dbReference type="ChEBI" id="CHEBI:15377"/>
        <dbReference type="ChEBI" id="CHEBI:15378"/>
        <dbReference type="ChEBI" id="CHEBI:17154"/>
        <dbReference type="ChEBI" id="CHEBI:29950"/>
        <dbReference type="ChEBI" id="CHEBI:57305"/>
        <dbReference type="ChEBI" id="CHEBI:57540"/>
        <dbReference type="ChEBI" id="CHEBI:90873"/>
        <dbReference type="ChEBI" id="CHEBI:139151"/>
        <dbReference type="EC" id="2.4.2.60"/>
    </reaction>
</comment>
<comment type="cofactor">
    <cofactor evidence="1">
        <name>Fe(2+)</name>
        <dbReference type="ChEBI" id="CHEBI:29033"/>
    </cofactor>
</comment>
<comment type="pathway">
    <text evidence="1">Cofactor biosynthesis; thiamine diphosphate biosynthesis.</text>
</comment>
<comment type="subunit">
    <text evidence="1">Homooctamer; tetramer of dimers.</text>
</comment>
<comment type="PTM">
    <text evidence="1">During the catalytic reaction, a sulfide is transferred from Cys-165 to a reaction intermediate, generating a dehydroalanine residue.</text>
</comment>
<comment type="similarity">
    <text evidence="1">Belongs to the THI4 family.</text>
</comment>
<keyword id="KW-0408">Iron</keyword>
<keyword id="KW-0479">Metal-binding</keyword>
<keyword id="KW-0520">NAD</keyword>
<keyword id="KW-0784">Thiamine biosynthesis</keyword>
<keyword id="KW-0808">Transferase</keyword>
<feature type="chain" id="PRO_1000115609" description="Thiamine thiazole synthase">
    <location>
        <begin position="1"/>
        <end position="310"/>
    </location>
</feature>
<feature type="binding site" description="in other chain" evidence="1">
    <location>
        <position position="42"/>
    </location>
    <ligand>
        <name>NAD(+)</name>
        <dbReference type="ChEBI" id="CHEBI:57540"/>
        <note>ligand shared between two adjacent protomers</note>
    </ligand>
</feature>
<feature type="binding site" description="in other chain" evidence="1">
    <location>
        <begin position="61"/>
        <end position="62"/>
    </location>
    <ligand>
        <name>NAD(+)</name>
        <dbReference type="ChEBI" id="CHEBI:57540"/>
        <note>ligand shared between two adjacent protomers</note>
    </ligand>
</feature>
<feature type="binding site" description="in other chain" evidence="1">
    <location>
        <position position="69"/>
    </location>
    <ligand>
        <name>NAD(+)</name>
        <dbReference type="ChEBI" id="CHEBI:57540"/>
        <note>ligand shared between two adjacent protomers</note>
    </ligand>
</feature>
<feature type="binding site" evidence="1">
    <location>
        <position position="167"/>
    </location>
    <ligand>
        <name>Fe cation</name>
        <dbReference type="ChEBI" id="CHEBI:24875"/>
        <note>ligand shared between two adjacent protomers</note>
    </ligand>
</feature>
<feature type="binding site" evidence="1">
    <location>
        <position position="167"/>
    </location>
    <ligand>
        <name>NAD(+)</name>
        <dbReference type="ChEBI" id="CHEBI:57540"/>
        <note>ligand shared between two adjacent protomers</note>
    </ligand>
</feature>
<feature type="binding site" description="in other chain" evidence="1">
    <location>
        <position position="182"/>
    </location>
    <ligand>
        <name>Fe cation</name>
        <dbReference type="ChEBI" id="CHEBI:24875"/>
        <note>ligand shared between two adjacent protomers</note>
    </ligand>
</feature>
<feature type="binding site" description="in other chain" evidence="1">
    <location>
        <position position="257"/>
    </location>
    <ligand>
        <name>NAD(+)</name>
        <dbReference type="ChEBI" id="CHEBI:57540"/>
        <note>ligand shared between two adjacent protomers</note>
    </ligand>
</feature>
<feature type="binding site" evidence="1">
    <location>
        <position position="267"/>
    </location>
    <ligand>
        <name>glycine</name>
        <dbReference type="ChEBI" id="CHEBI:57305"/>
    </ligand>
</feature>
<feature type="modified residue" description="2,3-didehydroalanine (Cys)" evidence="1">
    <location>
        <position position="165"/>
    </location>
</feature>
<accession>B0R884</accession>
<gene>
    <name evidence="1" type="primary">thi4</name>
    <name type="ordered locus">OE_4651F</name>
</gene>